<name>DNPH1_TETNG</name>
<feature type="chain" id="PRO_0000379459" description="5-hydroxymethyl-dUMP N-hydrolase">
    <location>
        <begin position="1"/>
        <end position="142"/>
    </location>
</feature>
<feature type="binding site" evidence="1">
    <location>
        <position position="7"/>
    </location>
    <ligand>
        <name>5-hydroxymethyl-dUMP</name>
        <dbReference type="ChEBI" id="CHEBI:90409"/>
        <note>ligand shared between homodimeric partners</note>
    </ligand>
</feature>
<feature type="binding site" evidence="1">
    <location>
        <position position="9"/>
    </location>
    <ligand>
        <name>5-hydroxymethyl-dUMP</name>
        <dbReference type="ChEBI" id="CHEBI:90409"/>
        <note>ligand shared between homodimeric partners</note>
    </ligand>
</feature>
<feature type="binding site" evidence="1">
    <location>
        <position position="10"/>
    </location>
    <ligand>
        <name>5-hydroxymethyl-dUMP</name>
        <dbReference type="ChEBI" id="CHEBI:90409"/>
        <note>ligand shared between homodimeric partners</note>
    </ligand>
</feature>
<feature type="binding site" evidence="1">
    <location>
        <position position="11"/>
    </location>
    <ligand>
        <name>5-hydroxymethyl-dUMP</name>
        <dbReference type="ChEBI" id="CHEBI:90409"/>
        <note>ligand shared between homodimeric partners</note>
    </ligand>
</feature>
<feature type="binding site" evidence="1">
    <location>
        <position position="78"/>
    </location>
    <ligand>
        <name>5-hydroxymethyl-dUMP</name>
        <dbReference type="ChEBI" id="CHEBI:90409"/>
        <note>ligand shared between homodimeric partners</note>
    </ligand>
</feature>
<feature type="binding site" evidence="1">
    <location>
        <position position="80"/>
    </location>
    <ligand>
        <name>5-hydroxymethyl-dUMP</name>
        <dbReference type="ChEBI" id="CHEBI:90409"/>
        <note>ligand shared between homodimeric partners</note>
    </ligand>
</feature>
<feature type="binding site" evidence="1">
    <location>
        <position position="84"/>
    </location>
    <ligand>
        <name>5-hydroxymethyl-dUMP</name>
        <dbReference type="ChEBI" id="CHEBI:90409"/>
        <note>ligand shared between homodimeric partners</note>
    </ligand>
</feature>
<feature type="binding site" description="in other chain" evidence="1">
    <location>
        <position position="108"/>
    </location>
    <ligand>
        <name>5-hydroxymethyl-dUMP</name>
        <dbReference type="ChEBI" id="CHEBI:90409"/>
        <note>ligand shared between homodimeric partners</note>
    </ligand>
</feature>
<dbReference type="EC" id="3.2.2.-" evidence="2"/>
<dbReference type="EMBL" id="CAAE01014760">
    <property type="protein sequence ID" value="CAG05118.1"/>
    <property type="status" value="ALT_SEQ"/>
    <property type="molecule type" value="Genomic_DNA"/>
</dbReference>
<dbReference type="SMR" id="Q4S2L4"/>
<dbReference type="FunCoup" id="Q4S2L4">
    <property type="interactions" value="721"/>
</dbReference>
<dbReference type="STRING" id="99883.ENSTNIP00000016373"/>
<dbReference type="KEGG" id="tng:GSTEN00025030G001"/>
<dbReference type="InParanoid" id="Q4S2L4"/>
<dbReference type="OrthoDB" id="18087at2759"/>
<dbReference type="Proteomes" id="UP000007303">
    <property type="component" value="Unassembled WGS sequence"/>
</dbReference>
<dbReference type="GO" id="GO:0005737">
    <property type="term" value="C:cytoplasm"/>
    <property type="evidence" value="ECO:0000250"/>
    <property type="project" value="UniProtKB"/>
</dbReference>
<dbReference type="GO" id="GO:0005634">
    <property type="term" value="C:nucleus"/>
    <property type="evidence" value="ECO:0000250"/>
    <property type="project" value="UniProtKB"/>
</dbReference>
<dbReference type="GO" id="GO:0070694">
    <property type="term" value="F:5-hydroxymethyl-dUMP N-hydrolase activity"/>
    <property type="evidence" value="ECO:0000250"/>
    <property type="project" value="UniProtKB"/>
</dbReference>
<dbReference type="GO" id="GO:0009159">
    <property type="term" value="P:deoxyribonucleoside monophosphate catabolic process"/>
    <property type="evidence" value="ECO:0000250"/>
    <property type="project" value="UniProtKB"/>
</dbReference>
<dbReference type="GO" id="GO:0043174">
    <property type="term" value="P:nucleoside salvage"/>
    <property type="evidence" value="ECO:0000250"/>
    <property type="project" value="UniProtKB"/>
</dbReference>
<dbReference type="GO" id="GO:0009117">
    <property type="term" value="P:nucleotide metabolic process"/>
    <property type="evidence" value="ECO:0007669"/>
    <property type="project" value="UniProtKB-KW"/>
</dbReference>
<dbReference type="GO" id="GO:0030307">
    <property type="term" value="P:positive regulation of cell growth"/>
    <property type="evidence" value="ECO:0000250"/>
    <property type="project" value="UniProtKB"/>
</dbReference>
<dbReference type="FunFam" id="3.40.50.450:FF:000019">
    <property type="entry name" value="2'-deoxynucleoside 5'-phosphate N-hydrolase 1"/>
    <property type="match status" value="1"/>
</dbReference>
<dbReference type="Gene3D" id="3.40.50.450">
    <property type="match status" value="1"/>
</dbReference>
<dbReference type="HAMAP" id="MF_03036">
    <property type="entry name" value="Nuc_phosphate_hydrolase"/>
    <property type="match status" value="1"/>
</dbReference>
<dbReference type="InterPro" id="IPR051239">
    <property type="entry name" value="2'-dNMP_N-hydrolase"/>
</dbReference>
<dbReference type="InterPro" id="IPR028607">
    <property type="entry name" value="DNPH1"/>
</dbReference>
<dbReference type="InterPro" id="IPR007710">
    <property type="entry name" value="Nucleoside_deoxyribTrfase"/>
</dbReference>
<dbReference type="PANTHER" id="PTHR15364">
    <property type="entry name" value="2'-DEOXYNUCLEOSIDE 5'-PHOSPHATE N-HYDROLASE 1"/>
    <property type="match status" value="1"/>
</dbReference>
<dbReference type="PANTHER" id="PTHR15364:SF0">
    <property type="entry name" value="2'-DEOXYNUCLEOSIDE 5'-PHOSPHATE N-HYDROLASE 1"/>
    <property type="match status" value="1"/>
</dbReference>
<dbReference type="Pfam" id="PF05014">
    <property type="entry name" value="Nuc_deoxyrib_tr"/>
    <property type="match status" value="1"/>
</dbReference>
<dbReference type="SUPFAM" id="SSF52309">
    <property type="entry name" value="N-(deoxy)ribosyltransferase-like"/>
    <property type="match status" value="1"/>
</dbReference>
<gene>
    <name type="primary">dnph1</name>
    <name type="ORF">GSTENG00025030001</name>
</gene>
<reference key="1">
    <citation type="journal article" date="2004" name="Nature">
        <title>Genome duplication in the teleost fish Tetraodon nigroviridis reveals the early vertebrate proto-karyotype.</title>
        <authorList>
            <person name="Jaillon O."/>
            <person name="Aury J.-M."/>
            <person name="Brunet F."/>
            <person name="Petit J.-L."/>
            <person name="Stange-Thomann N."/>
            <person name="Mauceli E."/>
            <person name="Bouneau L."/>
            <person name="Fischer C."/>
            <person name="Ozouf-Costaz C."/>
            <person name="Bernot A."/>
            <person name="Nicaud S."/>
            <person name="Jaffe D."/>
            <person name="Fisher S."/>
            <person name="Lutfalla G."/>
            <person name="Dossat C."/>
            <person name="Segurens B."/>
            <person name="Dasilva C."/>
            <person name="Salanoubat M."/>
            <person name="Levy M."/>
            <person name="Boudet N."/>
            <person name="Castellano S."/>
            <person name="Anthouard V."/>
            <person name="Jubin C."/>
            <person name="Castelli V."/>
            <person name="Katinka M."/>
            <person name="Vacherie B."/>
            <person name="Biemont C."/>
            <person name="Skalli Z."/>
            <person name="Cattolico L."/>
            <person name="Poulain J."/>
            <person name="De Berardinis V."/>
            <person name="Cruaud C."/>
            <person name="Duprat S."/>
            <person name="Brottier P."/>
            <person name="Coutanceau J.-P."/>
            <person name="Gouzy J."/>
            <person name="Parra G."/>
            <person name="Lardier G."/>
            <person name="Chapple C."/>
            <person name="McKernan K.J."/>
            <person name="McEwan P."/>
            <person name="Bosak S."/>
            <person name="Kellis M."/>
            <person name="Volff J.-N."/>
            <person name="Guigo R."/>
            <person name="Zody M.C."/>
            <person name="Mesirov J."/>
            <person name="Lindblad-Toh K."/>
            <person name="Birren B."/>
            <person name="Nusbaum C."/>
            <person name="Kahn D."/>
            <person name="Robinson-Rechavi M."/>
            <person name="Laudet V."/>
            <person name="Schachter V."/>
            <person name="Quetier F."/>
            <person name="Saurin W."/>
            <person name="Scarpelli C."/>
            <person name="Wincker P."/>
            <person name="Lander E.S."/>
            <person name="Weissenbach J."/>
            <person name="Roest Crollius H."/>
        </authorList>
    </citation>
    <scope>NUCLEOTIDE SEQUENCE [LARGE SCALE GENOMIC DNA]</scope>
</reference>
<comment type="function">
    <text evidence="2">Part of a nucleotide salvage pathway that eliminates epigenetically modified 5-hydroxymethyl-dCMP (hmdCMP) in a two-step process entailing deamination to cytotoxic 5-hydroxymethyl-dUMP (hmdUMP), followed by its hydrolysis into 5-hydroxymethyluracil (hmU) and 2-deoxy-D-ribose 5-phosphate (deoxyribosephosphate). Catalyzes the second step in that pathway, the hydrolysis of the N-glycosidic bond in hmdUMP, degrading this cytotoxic nucleotide to avoid its genomic integration.</text>
</comment>
<comment type="catalytic activity">
    <reaction evidence="2">
        <text>5-hydroxymethyl-dUMP + H2O = 5-hydroxymethyluracil + 2-deoxy-D-ribose 5-phosphate</text>
        <dbReference type="Rhea" id="RHEA:77099"/>
        <dbReference type="ChEBI" id="CHEBI:15377"/>
        <dbReference type="ChEBI" id="CHEBI:16964"/>
        <dbReference type="ChEBI" id="CHEBI:62877"/>
        <dbReference type="ChEBI" id="CHEBI:90409"/>
    </reaction>
    <physiologicalReaction direction="left-to-right" evidence="2">
        <dbReference type="Rhea" id="RHEA:77100"/>
    </physiologicalReaction>
</comment>
<comment type="subunit">
    <text evidence="2">Monomer and homodimer.</text>
</comment>
<comment type="subcellular location">
    <subcellularLocation>
        <location evidence="2">Cytoplasm</location>
    </subcellularLocation>
    <subcellularLocation>
        <location evidence="2">Nucleus</location>
    </subcellularLocation>
</comment>
<comment type="similarity">
    <text evidence="3">Belongs to the 2'-deoxynucleoside 5'-phosphate N-hydrolase 1 family.</text>
</comment>
<comment type="sequence caution" evidence="4">
    <conflict type="erroneous gene model prediction">
        <sequence resource="EMBL-CDS" id="CAG05118"/>
    </conflict>
</comment>
<keyword id="KW-0963">Cytoplasm</keyword>
<keyword id="KW-0326">Glycosidase</keyword>
<keyword id="KW-0378">Hydrolase</keyword>
<keyword id="KW-0546">Nucleotide metabolism</keyword>
<keyword id="KW-0539">Nucleus</keyword>
<keyword id="KW-0597">Phosphoprotein</keyword>
<keyword id="KW-1185">Reference proteome</keyword>
<sequence>MKVYFCGSIRGGRDDAELYHRMVAKLQSFATVLTEHVGRRELGDTGEHVTQGDRFIHDRDVDWLRQSDVVVAEVTQPSLGVGYELGRAVDMKKKVLCLFRPSSGRRLSAMIRGADNGDSFVVRDYCQDEIEQVLEDFFSNQK</sequence>
<organism>
    <name type="scientific">Tetraodon nigroviridis</name>
    <name type="common">Spotted green pufferfish</name>
    <name type="synonym">Chelonodon nigroviridis</name>
    <dbReference type="NCBI Taxonomy" id="99883"/>
    <lineage>
        <taxon>Eukaryota</taxon>
        <taxon>Metazoa</taxon>
        <taxon>Chordata</taxon>
        <taxon>Craniata</taxon>
        <taxon>Vertebrata</taxon>
        <taxon>Euteleostomi</taxon>
        <taxon>Actinopterygii</taxon>
        <taxon>Neopterygii</taxon>
        <taxon>Teleostei</taxon>
        <taxon>Neoteleostei</taxon>
        <taxon>Acanthomorphata</taxon>
        <taxon>Eupercaria</taxon>
        <taxon>Tetraodontiformes</taxon>
        <taxon>Tetradontoidea</taxon>
        <taxon>Tetraodontidae</taxon>
        <taxon>Tetraodon</taxon>
    </lineage>
</organism>
<accession>Q4S2L4</accession>
<evidence type="ECO:0000250" key="1">
    <source>
        <dbReference type="UniProtKB" id="O35820"/>
    </source>
</evidence>
<evidence type="ECO:0000250" key="2">
    <source>
        <dbReference type="UniProtKB" id="O43598"/>
    </source>
</evidence>
<evidence type="ECO:0000255" key="3">
    <source>
        <dbReference type="HAMAP-Rule" id="MF_03036"/>
    </source>
</evidence>
<evidence type="ECO:0000305" key="4"/>
<proteinExistence type="inferred from homology"/>
<protein>
    <recommendedName>
        <fullName evidence="2">5-hydroxymethyl-dUMP N-hydrolase</fullName>
        <ecNumber evidence="2">3.2.2.-</ecNumber>
    </recommendedName>
    <alternativeName>
        <fullName evidence="2">2'-deoxynucleoside 5'-phosphate N-hydrolase 1</fullName>
    </alternativeName>
</protein>